<reference key="1">
    <citation type="journal article" date="1999" name="Proc. Natl. Acad. Sci. U.S.A.">
        <title>The human LARGE gene from 22q12.3-q13.1 is a new, distinct member of the glycosyltransferase gene family.</title>
        <authorList>
            <person name="Peyrard M."/>
            <person name="Seroussi E."/>
            <person name="Sandberg-Nordqvist A.-C."/>
            <person name="Xie Y.-G."/>
            <person name="Han F.-Y."/>
            <person name="Fransson I."/>
            <person name="Collins J.E."/>
            <person name="Dunham I."/>
            <person name="Kost-Alimova M."/>
            <person name="Imreh S."/>
            <person name="Dumanski J.P."/>
        </authorList>
    </citation>
    <scope>NUCLEOTIDE SEQUENCE [MRNA]</scope>
    <source>
        <tissue>Brain</tissue>
        <tissue>Embryo</tissue>
    </source>
</reference>
<reference key="2">
    <citation type="journal article" date="2004" name="Genome Res.">
        <title>The status, quality, and expansion of the NIH full-length cDNA project: the Mammalian Gene Collection (MGC).</title>
        <authorList>
            <consortium name="The MGC Project Team"/>
        </authorList>
    </citation>
    <scope>NUCLEOTIDE SEQUENCE [LARGE SCALE MRNA]</scope>
    <source>
        <strain>FVB/N-3</strain>
        <tissue>Embryonic stem cell</tissue>
        <tissue>Mammary tumor</tissue>
    </source>
</reference>
<reference key="3">
    <citation type="journal article" date="2003" name="DNA Res.">
        <title>Prediction of the coding sequences of mouse homologues of KIAA gene: II. The complete nucleotide sequences of 400 mouse KIAA-homologous cDNAs identified by screening of terminal sequences of cDNA clones randomly sampled from size-fractionated libraries.</title>
        <authorList>
            <person name="Okazaki N."/>
            <person name="Kikuno R."/>
            <person name="Ohara R."/>
            <person name="Inamoto S."/>
            <person name="Aizawa H."/>
            <person name="Yuasa S."/>
            <person name="Nakajima D."/>
            <person name="Nagase T."/>
            <person name="Ohara O."/>
            <person name="Koga H."/>
        </authorList>
    </citation>
    <scope>NUCLEOTIDE SEQUENCE [LARGE SCALE MRNA]</scope>
</reference>
<reference key="4">
    <citation type="journal article" date="2001" name="Nat. Genet.">
        <title>Mutant glycosyltransferase and altered glycosylation of alpha-dystroglycan in the myodystrophy mouse.</title>
        <authorList>
            <person name="Grewal P.K."/>
            <person name="Holzfeind P.J."/>
            <person name="Bittner R.E."/>
            <person name="Hewitt J.E."/>
        </authorList>
    </citation>
    <scope>DISEASE</scope>
</reference>
<reference key="5">
    <citation type="journal article" date="2004" name="Cell">
        <title>Molecular recognition by LARGE is essential for expression of functional dystroglycan.</title>
        <authorList>
            <person name="Kanagawa M."/>
            <person name="Saito F."/>
            <person name="Kunz S."/>
            <person name="Yoshida-Moriguchi T."/>
            <person name="Barresi R."/>
            <person name="Kobayashi Y.M."/>
            <person name="Muschler J."/>
            <person name="Dumanski J.P."/>
            <person name="Michele D.E."/>
            <person name="Oldstone M.B."/>
            <person name="Campbell K.P."/>
        </authorList>
    </citation>
    <scope>INTERACTION WITH DAG1</scope>
</reference>
<reference key="6">
    <citation type="journal article" date="2005" name="Glycobiology">
        <title>Characterization of the LARGE family of putative glycosyltransferases associated with dystroglycanopathies.</title>
        <authorList>
            <person name="Grewal P.K."/>
            <person name="McLaughlan J.M."/>
            <person name="Moore C.J."/>
            <person name="Browning C.A."/>
            <person name="Hewitt J.E."/>
        </authorList>
    </citation>
    <scope>TISSUE SPECIFICITY</scope>
</reference>
<reference key="7">
    <citation type="journal article" date="2004" name="Nat. Med.">
        <authorList>
            <person name="Barresi R."/>
            <person name="Michele D.E."/>
            <person name="Kanagawa M."/>
            <person name="Harper H.A."/>
            <person name="Dovico S.A."/>
            <person name="Satz J.S."/>
            <person name="Moore S.A."/>
            <person name="Zhang W."/>
            <person name="Schachter H."/>
            <person name="Dumanski J.P."/>
            <person name="Cohn R.D."/>
            <person name="Nishino I."/>
            <person name="Campbell K.P."/>
        </authorList>
    </citation>
    <scope>FUNCTION</scope>
    <scope>PATHWAY</scope>
</reference>
<reference key="8">
    <citation type="journal article" date="2013" name="Glycobiology">
        <title>Xylosyl- and glucuronyltransferase functions of LARGE in alpha-dystroglycan modification are conserved in LARGE2.</title>
        <authorList>
            <person name="Inamori K."/>
            <person name="Hara Y."/>
            <person name="Willer T."/>
            <person name="Anderson M.E."/>
            <person name="Zhu Z."/>
            <person name="Yoshida-Moriguchi T."/>
            <person name="Campbell K.P."/>
        </authorList>
    </citation>
    <scope>FUNCTION</scope>
</reference>
<reference key="9">
    <citation type="journal article" date="2013" name="Glycobiology">
        <title>LARGE2 generates the same xylose- and glucuronic acid-containing glycan structures as LARGE.</title>
        <authorList>
            <person name="Ashikov A."/>
            <person name="Buettner F.F."/>
            <person name="Tiemann B."/>
            <person name="Gerardy-Schahn R."/>
            <person name="Bakker H."/>
        </authorList>
    </citation>
    <scope>FUNCTION</scope>
</reference>
<reference key="10">
    <citation type="journal article" date="2013" name="Nature">
        <title>LARGE glycans on dystroglycan function as a tunable matrix scaffold to prevent dystrophy.</title>
        <authorList>
            <person name="Goddeeris M.M."/>
            <person name="Wu B."/>
            <person name="Venzke D."/>
            <person name="Yoshida-Moriguchi T."/>
            <person name="Saito F."/>
            <person name="Matsumura K."/>
            <person name="Moore S.A."/>
            <person name="Campbell K.P."/>
        </authorList>
    </citation>
    <scope>FUNCTION</scope>
    <scope>PATHWAY</scope>
</reference>
<reference key="11">
    <citation type="journal article" date="2014" name="J. Biol. Chem.">
        <title>Endogenous glucuronyltransferase activity of LARGE or LARGE2 required for functional modification of alpha-dystroglycan in cells and tissues.</title>
        <authorList>
            <person name="Inamori K."/>
            <person name="Willer T."/>
            <person name="Hara Y."/>
            <person name="Venzke D."/>
            <person name="Anderson M.E."/>
            <person name="Clarke N.F."/>
            <person name="Guicheney P."/>
            <person name="Bonnemann C.G."/>
            <person name="Moore S.A."/>
            <person name="Campbell K.P."/>
        </authorList>
    </citation>
    <scope>FUNCTION</scope>
    <scope>CATALYTIC ACTIVITY</scope>
</reference>
<reference key="12">
    <citation type="journal article" date="2020" name="Elife">
        <title>POMK regulates dystroglycan function via LARGE1-mediated elongation of matriglycan.</title>
        <authorList>
            <person name="Walimbe A.S."/>
            <person name="Okuma H."/>
            <person name="Joseph S."/>
            <person name="Yang T."/>
            <person name="Yonekawa T."/>
            <person name="Hord J.M."/>
            <person name="Venzke D."/>
            <person name="Anderson M.E."/>
            <person name="Torelli S."/>
            <person name="Manzur A."/>
            <person name="Devereaux M."/>
            <person name="Cuellar M."/>
            <person name="Prouty S."/>
            <person name="Ocampo Landa S."/>
            <person name="Yu L."/>
            <person name="Xiao J."/>
            <person name="Dixon J.E."/>
            <person name="Muntoni F."/>
            <person name="Campbell K.P."/>
        </authorList>
    </citation>
    <scope>FUNCTION</scope>
    <scope>CATALYTIC ACTIVITY</scope>
</reference>
<gene>
    <name evidence="14" type="primary">Large1</name>
    <name type="synonym">Kiaa0609</name>
    <name type="synonym">Large</name>
</gene>
<proteinExistence type="evidence at protein level"/>
<evidence type="ECO:0000250" key="1">
    <source>
        <dbReference type="UniProtKB" id="O95461"/>
    </source>
</evidence>
<evidence type="ECO:0000255" key="2"/>
<evidence type="ECO:0000256" key="3">
    <source>
        <dbReference type="SAM" id="MobiDB-lite"/>
    </source>
</evidence>
<evidence type="ECO:0000269" key="4">
    <source>
    </source>
</evidence>
<evidence type="ECO:0000269" key="5">
    <source>
    </source>
</evidence>
<evidence type="ECO:0000269" key="6">
    <source>
    </source>
</evidence>
<evidence type="ECO:0000269" key="7">
    <source>
    </source>
</evidence>
<evidence type="ECO:0000269" key="8">
    <source>
    </source>
</evidence>
<evidence type="ECO:0000269" key="9">
    <source>
    </source>
</evidence>
<evidence type="ECO:0000269" key="10">
    <source>
    </source>
</evidence>
<evidence type="ECO:0000269" key="11">
    <source>
    </source>
</evidence>
<evidence type="ECO:0000305" key="12"/>
<evidence type="ECO:0000305" key="13">
    <source>
    </source>
</evidence>
<evidence type="ECO:0000312" key="14">
    <source>
        <dbReference type="MGI" id="MGI:1342270"/>
    </source>
</evidence>
<dbReference type="EC" id="2.4.-.-" evidence="1"/>
<dbReference type="EC" id="2.4.2.-" evidence="1"/>
<dbReference type="EC" id="2.4.1.-" evidence="10 11"/>
<dbReference type="EMBL" id="AJ006278">
    <property type="protein sequence ID" value="CAA06945.1"/>
    <property type="molecule type" value="mRNA"/>
</dbReference>
<dbReference type="EMBL" id="AK122328">
    <property type="protein sequence ID" value="BAC65610.1"/>
    <property type="status" value="ALT_FRAME"/>
    <property type="molecule type" value="mRNA"/>
</dbReference>
<dbReference type="EMBL" id="BC061506">
    <property type="protein sequence ID" value="AAH61506.1"/>
    <property type="status" value="ALT_INIT"/>
    <property type="molecule type" value="mRNA"/>
</dbReference>
<dbReference type="EMBL" id="BC100399">
    <property type="protein sequence ID" value="AAI00400.1"/>
    <property type="molecule type" value="mRNA"/>
</dbReference>
<dbReference type="CCDS" id="CCDS22420.1"/>
<dbReference type="RefSeq" id="NP_001304320.1">
    <property type="nucleotide sequence ID" value="NM_001317391.2"/>
</dbReference>
<dbReference type="RefSeq" id="NP_034817.1">
    <property type="nucleotide sequence ID" value="NM_010687.3"/>
</dbReference>
<dbReference type="SMR" id="Q9Z1M7"/>
<dbReference type="FunCoup" id="Q9Z1M7">
    <property type="interactions" value="711"/>
</dbReference>
<dbReference type="STRING" id="10090.ENSMUSP00000148336"/>
<dbReference type="CAZy" id="GT49">
    <property type="family name" value="Glycosyltransferase Family 49"/>
</dbReference>
<dbReference type="CAZy" id="GT8">
    <property type="family name" value="Glycosyltransferase Family 8"/>
</dbReference>
<dbReference type="GlyCosmos" id="Q9Z1M7">
    <property type="glycosylation" value="4 sites, No reported glycans"/>
</dbReference>
<dbReference type="GlyGen" id="Q9Z1M7">
    <property type="glycosylation" value="4 sites, 3 N-linked glycans (3 sites)"/>
</dbReference>
<dbReference type="PhosphoSitePlus" id="Q9Z1M7"/>
<dbReference type="SwissPalm" id="Q9Z1M7"/>
<dbReference type="PaxDb" id="10090-ENSMUSP00000112617"/>
<dbReference type="ProteomicsDB" id="265041"/>
<dbReference type="Pumba" id="Q9Z1M7"/>
<dbReference type="Antibodypedia" id="25305">
    <property type="antibodies" value="164 antibodies from 28 providers"/>
</dbReference>
<dbReference type="DNASU" id="16795"/>
<dbReference type="Ensembl" id="ENSMUST00000004497.11">
    <property type="protein sequence ID" value="ENSMUSP00000004497.10"/>
    <property type="gene ID" value="ENSMUSG00000004383.19"/>
</dbReference>
<dbReference type="Ensembl" id="ENSMUST00000119826.7">
    <property type="protein sequence ID" value="ENSMUSP00000112617.2"/>
    <property type="gene ID" value="ENSMUSG00000004383.19"/>
</dbReference>
<dbReference type="Ensembl" id="ENSMUST00000212459.2">
    <property type="protein sequence ID" value="ENSMUSP00000148336.2"/>
    <property type="gene ID" value="ENSMUSG00000004383.19"/>
</dbReference>
<dbReference type="GeneID" id="16795"/>
<dbReference type="KEGG" id="mmu:16795"/>
<dbReference type="UCSC" id="uc009mgs.1">
    <property type="organism name" value="mouse"/>
</dbReference>
<dbReference type="AGR" id="MGI:1342270"/>
<dbReference type="CTD" id="9215"/>
<dbReference type="MGI" id="MGI:1342270">
    <property type="gene designation" value="Large1"/>
</dbReference>
<dbReference type="VEuPathDB" id="HostDB:ENSMUSG00000004383"/>
<dbReference type="eggNOG" id="KOG3765">
    <property type="taxonomic scope" value="Eukaryota"/>
</dbReference>
<dbReference type="GeneTree" id="ENSGT00940000158497"/>
<dbReference type="HOGENOM" id="CLU_019238_3_2_1"/>
<dbReference type="InParanoid" id="Q9Z1M7"/>
<dbReference type="OMA" id="EPYEVSW"/>
<dbReference type="OrthoDB" id="411524at2759"/>
<dbReference type="PhylomeDB" id="Q9Z1M7"/>
<dbReference type="TreeFam" id="TF319168"/>
<dbReference type="BRENDA" id="2.4.1.B80">
    <property type="organism ID" value="3474"/>
</dbReference>
<dbReference type="BRENDA" id="2.4.2.B18">
    <property type="organism ID" value="3474"/>
</dbReference>
<dbReference type="Reactome" id="R-MMU-5173105">
    <property type="pathway name" value="O-linked glycosylation"/>
</dbReference>
<dbReference type="UniPathway" id="UPA00378"/>
<dbReference type="BioGRID-ORCS" id="16795">
    <property type="hits" value="4 hits in 75 CRISPR screens"/>
</dbReference>
<dbReference type="ChiTaRS" id="Large1">
    <property type="organism name" value="mouse"/>
</dbReference>
<dbReference type="PRO" id="PR:Q9Z1M7"/>
<dbReference type="Proteomes" id="UP000000589">
    <property type="component" value="Chromosome 8"/>
</dbReference>
<dbReference type="RNAct" id="Q9Z1M7">
    <property type="molecule type" value="protein"/>
</dbReference>
<dbReference type="Bgee" id="ENSMUSG00000004383">
    <property type="expression patterns" value="Expressed in decidua and 265 other cell types or tissues"/>
</dbReference>
<dbReference type="ExpressionAtlas" id="Q9Z1M7">
    <property type="expression patterns" value="baseline and differential"/>
</dbReference>
<dbReference type="GO" id="GO:0005794">
    <property type="term" value="C:Golgi apparatus"/>
    <property type="evidence" value="ECO:0000314"/>
    <property type="project" value="MGI"/>
</dbReference>
<dbReference type="GO" id="GO:0000139">
    <property type="term" value="C:Golgi membrane"/>
    <property type="evidence" value="ECO:0000314"/>
    <property type="project" value="UniProtKB"/>
</dbReference>
<dbReference type="GO" id="GO:0043231">
    <property type="term" value="C:intracellular membrane-bounded organelle"/>
    <property type="evidence" value="ECO:0000314"/>
    <property type="project" value="MGI"/>
</dbReference>
<dbReference type="GO" id="GO:0031594">
    <property type="term" value="C:neuromuscular junction"/>
    <property type="evidence" value="ECO:0000315"/>
    <property type="project" value="MGI"/>
</dbReference>
<dbReference type="GO" id="GO:0005886">
    <property type="term" value="C:plasma membrane"/>
    <property type="evidence" value="ECO:0000315"/>
    <property type="project" value="MGI"/>
</dbReference>
<dbReference type="GO" id="GO:0032991">
    <property type="term" value="C:protein-containing complex"/>
    <property type="evidence" value="ECO:0000314"/>
    <property type="project" value="MGI"/>
</dbReference>
<dbReference type="GO" id="GO:0015020">
    <property type="term" value="F:glucuronosyltransferase activity"/>
    <property type="evidence" value="ECO:0000314"/>
    <property type="project" value="UniProtKB"/>
</dbReference>
<dbReference type="GO" id="GO:0016757">
    <property type="term" value="F:glycosyltransferase activity"/>
    <property type="evidence" value="ECO:0000315"/>
    <property type="project" value="MGI"/>
</dbReference>
<dbReference type="GO" id="GO:0016758">
    <property type="term" value="F:hexosyltransferase activity"/>
    <property type="evidence" value="ECO:0000314"/>
    <property type="project" value="UniProtKB"/>
</dbReference>
<dbReference type="GO" id="GO:0030145">
    <property type="term" value="F:manganese ion binding"/>
    <property type="evidence" value="ECO:0000250"/>
    <property type="project" value="UniProtKB"/>
</dbReference>
<dbReference type="GO" id="GO:0042285">
    <property type="term" value="F:xylosyltransferase activity"/>
    <property type="evidence" value="ECO:0000314"/>
    <property type="project" value="UniProtKB"/>
</dbReference>
<dbReference type="GO" id="GO:0095500">
    <property type="term" value="P:acetylcholine receptor signaling pathway"/>
    <property type="evidence" value="ECO:0000315"/>
    <property type="project" value="MGI"/>
</dbReference>
<dbReference type="GO" id="GO:0048708">
    <property type="term" value="P:astrocyte differentiation"/>
    <property type="evidence" value="ECO:0000315"/>
    <property type="project" value="MGI"/>
</dbReference>
<dbReference type="GO" id="GO:0071711">
    <property type="term" value="P:basement membrane organization"/>
    <property type="evidence" value="ECO:0000315"/>
    <property type="project" value="MGI"/>
</dbReference>
<dbReference type="GO" id="GO:0001662">
    <property type="term" value="P:behavioral fear response"/>
    <property type="evidence" value="ECO:0000315"/>
    <property type="project" value="MGI"/>
</dbReference>
<dbReference type="GO" id="GO:0001568">
    <property type="term" value="P:blood vessel development"/>
    <property type="evidence" value="ECO:0000315"/>
    <property type="project" value="MGI"/>
</dbReference>
<dbReference type="GO" id="GO:0060348">
    <property type="term" value="P:bone development"/>
    <property type="evidence" value="ECO:0000316"/>
    <property type="project" value="MGI"/>
</dbReference>
<dbReference type="GO" id="GO:0007420">
    <property type="term" value="P:brain development"/>
    <property type="evidence" value="ECO:0000314"/>
    <property type="project" value="MGI"/>
</dbReference>
<dbReference type="GO" id="GO:0055013">
    <property type="term" value="P:cardiac muscle cell development"/>
    <property type="evidence" value="ECO:0000315"/>
    <property type="project" value="MGI"/>
</dbReference>
<dbReference type="GO" id="GO:0048738">
    <property type="term" value="P:cardiac muscle tissue development"/>
    <property type="evidence" value="ECO:0000315"/>
    <property type="project" value="MGI"/>
</dbReference>
<dbReference type="GO" id="GO:0007268">
    <property type="term" value="P:chemical synaptic transmission"/>
    <property type="evidence" value="ECO:0000314"/>
    <property type="project" value="MGI"/>
</dbReference>
<dbReference type="GO" id="GO:0061448">
    <property type="term" value="P:connective tissue development"/>
    <property type="evidence" value="ECO:0000314"/>
    <property type="project" value="MGI"/>
</dbReference>
<dbReference type="GO" id="GO:0007010">
    <property type="term" value="P:cytoskeleton organization"/>
    <property type="evidence" value="ECO:0000315"/>
    <property type="project" value="MGI"/>
</dbReference>
<dbReference type="GO" id="GO:0021542">
    <property type="term" value="P:dentate gyrus development"/>
    <property type="evidence" value="ECO:0000315"/>
    <property type="project" value="MGI"/>
</dbReference>
<dbReference type="GO" id="GO:0008340">
    <property type="term" value="P:determination of adult lifespan"/>
    <property type="evidence" value="ECO:0000314"/>
    <property type="project" value="MGI"/>
</dbReference>
<dbReference type="GO" id="GO:0010467">
    <property type="term" value="P:gene expression"/>
    <property type="evidence" value="ECO:0000314"/>
    <property type="project" value="MGI"/>
</dbReference>
<dbReference type="GO" id="GO:0009101">
    <property type="term" value="P:glycoprotein biosynthetic process"/>
    <property type="evidence" value="ECO:0000314"/>
    <property type="project" value="MGI"/>
</dbReference>
<dbReference type="GO" id="GO:0009100">
    <property type="term" value="P:glycoprotein metabolic process"/>
    <property type="evidence" value="ECO:0000315"/>
    <property type="project" value="MGI"/>
</dbReference>
<dbReference type="GO" id="GO:0007507">
    <property type="term" value="P:heart development"/>
    <property type="evidence" value="ECO:0000315"/>
    <property type="project" value="MGI"/>
</dbReference>
<dbReference type="GO" id="GO:0006886">
    <property type="term" value="P:intracellular protein transport"/>
    <property type="evidence" value="ECO:0000314"/>
    <property type="project" value="MGI"/>
</dbReference>
<dbReference type="GO" id="GO:0060173">
    <property type="term" value="P:limb development"/>
    <property type="evidence" value="ECO:0000316"/>
    <property type="project" value="MGI"/>
</dbReference>
<dbReference type="GO" id="GO:0051674">
    <property type="term" value="P:localization of cell"/>
    <property type="evidence" value="ECO:0000315"/>
    <property type="project" value="MGI"/>
</dbReference>
<dbReference type="GO" id="GO:0060291">
    <property type="term" value="P:long-term synaptic potentiation"/>
    <property type="evidence" value="ECO:0000315"/>
    <property type="project" value="MGI"/>
</dbReference>
<dbReference type="GO" id="GO:0030225">
    <property type="term" value="P:macrophage differentiation"/>
    <property type="evidence" value="ECO:0000314"/>
    <property type="project" value="MGI"/>
</dbReference>
<dbReference type="GO" id="GO:0007613">
    <property type="term" value="P:memory"/>
    <property type="evidence" value="ECO:0000315"/>
    <property type="project" value="MGI"/>
</dbReference>
<dbReference type="GO" id="GO:0035264">
    <property type="term" value="P:multicellular organism growth"/>
    <property type="evidence" value="ECO:0000314"/>
    <property type="project" value="MGI"/>
</dbReference>
<dbReference type="GO" id="GO:0046716">
    <property type="term" value="P:muscle cell cellular homeostasis"/>
    <property type="evidence" value="ECO:0000315"/>
    <property type="project" value="UniProtKB"/>
</dbReference>
<dbReference type="GO" id="GO:0007517">
    <property type="term" value="P:muscle organ development"/>
    <property type="evidence" value="ECO:0000314"/>
    <property type="project" value="MGI"/>
</dbReference>
<dbReference type="GO" id="GO:0042552">
    <property type="term" value="P:myelination"/>
    <property type="evidence" value="ECO:0000315"/>
    <property type="project" value="MGI"/>
</dbReference>
<dbReference type="GO" id="GO:0014902">
    <property type="term" value="P:myotube differentiation"/>
    <property type="evidence" value="ECO:0000314"/>
    <property type="project" value="MGI"/>
</dbReference>
<dbReference type="GO" id="GO:0021675">
    <property type="term" value="P:nerve development"/>
    <property type="evidence" value="ECO:0000315"/>
    <property type="project" value="MGI"/>
</dbReference>
<dbReference type="GO" id="GO:0007528">
    <property type="term" value="P:neuromuscular junction development"/>
    <property type="evidence" value="ECO:0000314"/>
    <property type="project" value="MGI"/>
</dbReference>
<dbReference type="GO" id="GO:0050905">
    <property type="term" value="P:neuromuscular process"/>
    <property type="evidence" value="ECO:0000316"/>
    <property type="project" value="MGI"/>
</dbReference>
<dbReference type="GO" id="GO:0050884">
    <property type="term" value="P:neuromuscular process controlling posture"/>
    <property type="evidence" value="ECO:0000314"/>
    <property type="project" value="MGI"/>
</dbReference>
<dbReference type="GO" id="GO:0007274">
    <property type="term" value="P:neuromuscular synaptic transmission"/>
    <property type="evidence" value="ECO:0000314"/>
    <property type="project" value="MGI"/>
</dbReference>
<dbReference type="GO" id="GO:0001764">
    <property type="term" value="P:neuron migration"/>
    <property type="evidence" value="ECO:0000315"/>
    <property type="project" value="MGI"/>
</dbReference>
<dbReference type="GO" id="GO:0007009">
    <property type="term" value="P:plasma membrane organization"/>
    <property type="evidence" value="ECO:0000315"/>
    <property type="project" value="MGI"/>
</dbReference>
<dbReference type="GO" id="GO:0035129">
    <property type="term" value="P:post-embryonic hindlimb morphogenesis"/>
    <property type="evidence" value="ECO:0000314"/>
    <property type="project" value="MGI"/>
</dbReference>
<dbReference type="GO" id="GO:0043687">
    <property type="term" value="P:post-translational protein modification"/>
    <property type="evidence" value="ECO:0000315"/>
    <property type="project" value="MGI"/>
</dbReference>
<dbReference type="GO" id="GO:0071805">
    <property type="term" value="P:potassium ion transmembrane transport"/>
    <property type="evidence" value="ECO:0000315"/>
    <property type="project" value="MGI"/>
</dbReference>
<dbReference type="GO" id="GO:0021740">
    <property type="term" value="P:principal sensory nucleus of trigeminal nerve development"/>
    <property type="evidence" value="ECO:0000315"/>
    <property type="project" value="MGI"/>
</dbReference>
<dbReference type="GO" id="GO:0006486">
    <property type="term" value="P:protein glycosylation"/>
    <property type="evidence" value="ECO:0000314"/>
    <property type="project" value="MGI"/>
</dbReference>
<dbReference type="GO" id="GO:0008104">
    <property type="term" value="P:protein localization"/>
    <property type="evidence" value="ECO:0000315"/>
    <property type="project" value="MGI"/>
</dbReference>
<dbReference type="GO" id="GO:0072657">
    <property type="term" value="P:protein localization to membrane"/>
    <property type="evidence" value="ECO:0000315"/>
    <property type="project" value="MGI"/>
</dbReference>
<dbReference type="GO" id="GO:0072659">
    <property type="term" value="P:protein localization to plasma membrane"/>
    <property type="evidence" value="ECO:0000315"/>
    <property type="project" value="MGI"/>
</dbReference>
<dbReference type="GO" id="GO:0036211">
    <property type="term" value="P:protein modification process"/>
    <property type="evidence" value="ECO:0000314"/>
    <property type="project" value="MGI"/>
</dbReference>
<dbReference type="GO" id="GO:0006493">
    <property type="term" value="P:protein O-linked glycosylation"/>
    <property type="evidence" value="ECO:0000315"/>
    <property type="project" value="MGI"/>
</dbReference>
<dbReference type="GO" id="GO:0035269">
    <property type="term" value="P:protein O-linked mannosylation"/>
    <property type="evidence" value="ECO:0000314"/>
    <property type="project" value="UniProtKB"/>
</dbReference>
<dbReference type="GO" id="GO:0006612">
    <property type="term" value="P:protein targeting to membrane"/>
    <property type="evidence" value="ECO:0000314"/>
    <property type="project" value="MGI"/>
</dbReference>
<dbReference type="GO" id="GO:0065003">
    <property type="term" value="P:protein-containing complex assembly"/>
    <property type="evidence" value="ECO:0000315"/>
    <property type="project" value="MGI"/>
</dbReference>
<dbReference type="GO" id="GO:0150103">
    <property type="term" value="P:reactive gliosis"/>
    <property type="evidence" value="ECO:0000315"/>
    <property type="project" value="MGI"/>
</dbReference>
<dbReference type="GO" id="GO:0048167">
    <property type="term" value="P:regulation of synaptic plasticity"/>
    <property type="evidence" value="ECO:0000315"/>
    <property type="project" value="MGI"/>
</dbReference>
<dbReference type="GO" id="GO:0009416">
    <property type="term" value="P:response to light stimulus"/>
    <property type="evidence" value="ECO:0000315"/>
    <property type="project" value="MGI"/>
</dbReference>
<dbReference type="GO" id="GO:0009612">
    <property type="term" value="P:response to mechanical stimulus"/>
    <property type="evidence" value="ECO:0000315"/>
    <property type="project" value="MGI"/>
</dbReference>
<dbReference type="GO" id="GO:0060041">
    <property type="term" value="P:retina development in camera-type eye"/>
    <property type="evidence" value="ECO:0000315"/>
    <property type="project" value="MGI"/>
</dbReference>
<dbReference type="GO" id="GO:0010842">
    <property type="term" value="P:retina layer formation"/>
    <property type="evidence" value="ECO:0000315"/>
    <property type="project" value="MGI"/>
</dbReference>
<dbReference type="GO" id="GO:0061298">
    <property type="term" value="P:retina vasculature development in camera-type eye"/>
    <property type="evidence" value="ECO:0000315"/>
    <property type="project" value="MGI"/>
</dbReference>
<dbReference type="GO" id="GO:0007605">
    <property type="term" value="P:sensory perception of sound"/>
    <property type="evidence" value="ECO:0000315"/>
    <property type="project" value="MGI"/>
</dbReference>
<dbReference type="GO" id="GO:0048741">
    <property type="term" value="P:skeletal muscle fiber development"/>
    <property type="evidence" value="ECO:0000315"/>
    <property type="project" value="MGI"/>
</dbReference>
<dbReference type="GO" id="GO:0098528">
    <property type="term" value="P:skeletal muscle fiber differentiation"/>
    <property type="evidence" value="ECO:0000314"/>
    <property type="project" value="MGI"/>
</dbReference>
<dbReference type="GO" id="GO:0060538">
    <property type="term" value="P:skeletal muscle organ development"/>
    <property type="evidence" value="ECO:0000314"/>
    <property type="project" value="UniProtKB"/>
</dbReference>
<dbReference type="GO" id="GO:0043403">
    <property type="term" value="P:skeletal muscle tissue regeneration"/>
    <property type="evidence" value="ECO:0000314"/>
    <property type="project" value="UniProtKB"/>
</dbReference>
<dbReference type="GO" id="GO:0055002">
    <property type="term" value="P:striated muscle cell development"/>
    <property type="evidence" value="ECO:0000314"/>
    <property type="project" value="MGI"/>
</dbReference>
<dbReference type="GO" id="GO:0006941">
    <property type="term" value="P:striated muscle contraction"/>
    <property type="evidence" value="ECO:0000314"/>
    <property type="project" value="MGI"/>
</dbReference>
<dbReference type="GO" id="GO:0050808">
    <property type="term" value="P:synapse organization"/>
    <property type="evidence" value="ECO:0000315"/>
    <property type="project" value="MGI"/>
</dbReference>
<dbReference type="GO" id="GO:0051124">
    <property type="term" value="P:synaptic assembly at neuromuscular junction"/>
    <property type="evidence" value="ECO:0000315"/>
    <property type="project" value="MGI"/>
</dbReference>
<dbReference type="GO" id="GO:0055085">
    <property type="term" value="P:transmembrane transport"/>
    <property type="evidence" value="ECO:0000315"/>
    <property type="project" value="MGI"/>
</dbReference>
<dbReference type="GO" id="GO:0090659">
    <property type="term" value="P:walking behavior"/>
    <property type="evidence" value="ECO:0000316"/>
    <property type="project" value="MGI"/>
</dbReference>
<dbReference type="GO" id="GO:0006833">
    <property type="term" value="P:water transport"/>
    <property type="evidence" value="ECO:0000315"/>
    <property type="project" value="MGI"/>
</dbReference>
<dbReference type="CDD" id="cd06431">
    <property type="entry name" value="GT8_LARGE_C"/>
    <property type="match status" value="1"/>
</dbReference>
<dbReference type="FunFam" id="3.90.550.10:FF:000229">
    <property type="entry name" value="Glycosyltransferase-like protein LARGE"/>
    <property type="match status" value="1"/>
</dbReference>
<dbReference type="FunFam" id="3.90.550.10:FF:000016">
    <property type="entry name" value="LARGE xylosyl- and glucuronyltransferase 2"/>
    <property type="match status" value="1"/>
</dbReference>
<dbReference type="Gene3D" id="3.90.550.10">
    <property type="entry name" value="Spore Coat Polysaccharide Biosynthesis Protein SpsA, Chain A"/>
    <property type="match status" value="1"/>
</dbReference>
<dbReference type="InterPro" id="IPR002495">
    <property type="entry name" value="Glyco_trans_8"/>
</dbReference>
<dbReference type="InterPro" id="IPR029044">
    <property type="entry name" value="Nucleotide-diphossugar_trans"/>
</dbReference>
<dbReference type="InterPro" id="IPR051292">
    <property type="entry name" value="Xyl/GlcA_transferase"/>
</dbReference>
<dbReference type="PANTHER" id="PTHR12270">
    <property type="entry name" value="GLYCOSYLTRANSFERASE-RELATED"/>
    <property type="match status" value="1"/>
</dbReference>
<dbReference type="PANTHER" id="PTHR12270:SF48">
    <property type="entry name" value="XYLOSYL- AND GLUCURONYLTRANSFERASE LARGE1"/>
    <property type="match status" value="1"/>
</dbReference>
<dbReference type="Pfam" id="PF13896">
    <property type="entry name" value="Glyco_transf_49"/>
    <property type="match status" value="1"/>
</dbReference>
<dbReference type="Pfam" id="PF01501">
    <property type="entry name" value="Glyco_transf_8"/>
    <property type="match status" value="1"/>
</dbReference>
<dbReference type="SUPFAM" id="SSF53448">
    <property type="entry name" value="Nucleotide-diphospho-sugar transferases"/>
    <property type="match status" value="1"/>
</dbReference>
<feature type="chain" id="PRO_0000206061" description="Xylosyl- and glucuronyltransferase LARGE1">
    <location>
        <begin position="1"/>
        <end position="756"/>
    </location>
</feature>
<feature type="topological domain" description="Cytoplasmic" evidence="2">
    <location>
        <begin position="1"/>
        <end position="10"/>
    </location>
</feature>
<feature type="transmembrane region" description="Helical; Signal-anchor for type II membrane protein" evidence="2">
    <location>
        <begin position="11"/>
        <end position="31"/>
    </location>
</feature>
<feature type="topological domain" description="Lumenal" evidence="2">
    <location>
        <begin position="32"/>
        <end position="756"/>
    </location>
</feature>
<feature type="region of interest" description="Disordered" evidence="3">
    <location>
        <begin position="43"/>
        <end position="64"/>
    </location>
</feature>
<feature type="region of interest" description="Disordered" evidence="3">
    <location>
        <begin position="82"/>
        <end position="108"/>
    </location>
</feature>
<feature type="region of interest" description="Xylosyltransferase activity" evidence="1">
    <location>
        <begin position="138"/>
        <end position="413"/>
    </location>
</feature>
<feature type="region of interest" description="Glucuronyltransferase activity" evidence="1">
    <location>
        <begin position="414"/>
        <end position="756"/>
    </location>
</feature>
<feature type="coiled-coil region" evidence="2">
    <location>
        <begin position="53"/>
        <end position="95"/>
    </location>
</feature>
<feature type="compositionally biased region" description="Polar residues" evidence="3">
    <location>
        <begin position="44"/>
        <end position="58"/>
    </location>
</feature>
<feature type="binding site" evidence="1">
    <location>
        <position position="242"/>
    </location>
    <ligand>
        <name>Mn(2+)</name>
        <dbReference type="ChEBI" id="CHEBI:29035"/>
        <label>1</label>
    </ligand>
</feature>
<feature type="binding site" evidence="1">
    <location>
        <position position="244"/>
    </location>
    <ligand>
        <name>Mn(2+)</name>
        <dbReference type="ChEBI" id="CHEBI:29035"/>
        <label>1</label>
    </ligand>
</feature>
<feature type="binding site" evidence="1">
    <location>
        <position position="563"/>
    </location>
    <ligand>
        <name>Mn(2+)</name>
        <dbReference type="ChEBI" id="CHEBI:29035"/>
        <label>2</label>
    </ligand>
</feature>
<feature type="binding site" evidence="1">
    <location>
        <position position="565"/>
    </location>
    <ligand>
        <name>Mn(2+)</name>
        <dbReference type="ChEBI" id="CHEBI:29035"/>
        <label>2</label>
    </ligand>
</feature>
<feature type="glycosylation site" description="N-linked (GlcNAc...) asparagine" evidence="2">
    <location>
        <position position="97"/>
    </location>
</feature>
<feature type="glycosylation site" description="N-linked (GlcNAc...) asparagine" evidence="2">
    <location>
        <position position="122"/>
    </location>
</feature>
<feature type="glycosylation site" description="N-linked (GlcNAc...) asparagine" evidence="2">
    <location>
        <position position="148"/>
    </location>
</feature>
<feature type="glycosylation site" description="N-linked (GlcNAc...) asparagine" evidence="2">
    <location>
        <position position="272"/>
    </location>
</feature>
<feature type="sequence conflict" description="In Ref. 3; AAI00400." evidence="12" ref="3">
    <original>L</original>
    <variation>S</variation>
    <location>
        <position position="269"/>
    </location>
</feature>
<feature type="sequence conflict" description="In Ref. 3; AAI00400." evidence="12" ref="3">
    <original>L</original>
    <variation>H</variation>
    <location>
        <position position="324"/>
    </location>
</feature>
<feature type="sequence conflict" description="In Ref. 3; AAI00400." evidence="12" ref="3">
    <original>D</original>
    <variation>N</variation>
    <location>
        <position position="441"/>
    </location>
</feature>
<feature type="sequence conflict" description="In Ref. 3; AAI00400." evidence="12" ref="3">
    <original>K</original>
    <variation>E</variation>
    <location>
        <position position="748"/>
    </location>
</feature>
<comment type="function">
    <text evidence="1 4 7 8 9 10 11">Bifunctional glycosyltransferase with both alpha-1,3-xylosyltransferase and beta-1,3-glucuronyltransferase activities involved in the maturation of alpha-dystroglycan (DAG1) by glycosylation leading to DAG1 binding to laminin G-like domain-containing extracellular proteins with high affinity (PubMed:23125099, PubMed:23135544, PubMed:25138275, PubMed:32975514). Elongates the glucuronyl-beta-1,4-xylose-beta disaccharide primer structure initiated by B4GAT1 by adding repeating units [-3-Xylose-alpha-1,3-GlcA-beta-1-] to produce a heteropolysaccharide (By similarity). Requires the phosphorylation of core M3 (O-mannosyl trisaccharide) by POMK to elongate the glucuronyl-beta-1,4-xylose-beta disaccharide primer (PubMed:32975514). Plays a key role in skeletal muscle function and regeneration (PubMed:15184894, PubMed:24132234).</text>
</comment>
<comment type="catalytic activity">
    <reaction evidence="1">
        <text>3-O-[beta-D-GlcA-(1-&gt;3)-beta-D-Xyl-(1-&gt;4)-Rib-ol-P-Rib-ol-P-3-beta-D-GalNAc-(1-&gt;3)-beta-D-GlcNAc-(1-&gt;4)-(O-6-P-alpha-D-Man)]-Thr-[protein] + UDP-alpha-D-xylose = 3-O-[alpha-D-Xyl-(1-&gt;3)-beta-D-GlcA-(1-&gt;4)-beta-D-Xyl-(1-&gt;4)-Rib-ol-P-Rib-ol-P-3-beta-D-GalNAc-(1-&gt;3)-beta-D-GlcNAc-(1-&gt;4)-(O-6-P-alpha-D-Man)]-Thr-[protein] + UDP + H(+)</text>
        <dbReference type="Rhea" id="RHEA:57336"/>
        <dbReference type="Rhea" id="RHEA-COMP:17482"/>
        <dbReference type="Rhea" id="RHEA-COMP:17483"/>
        <dbReference type="ChEBI" id="CHEBI:15378"/>
        <dbReference type="ChEBI" id="CHEBI:57632"/>
        <dbReference type="ChEBI" id="CHEBI:58223"/>
        <dbReference type="ChEBI" id="CHEBI:177336"/>
        <dbReference type="ChEBI" id="CHEBI:177352"/>
    </reaction>
    <physiologicalReaction direction="left-to-right" evidence="1">
        <dbReference type="Rhea" id="RHEA:57337"/>
    </physiologicalReaction>
</comment>
<comment type="catalytic activity">
    <reaction evidence="10 11">
        <text>3-O-{(1-&gt;[3)-alpha-D-Xyl-(1-&gt;3)-beta-D-GlcA-(1-&gt;](n)-4)-beta-D-Xyl-(1-&gt;4)-Rib-ol-P-Rib-ol-P-3-beta-D-GalNAc-(1-&gt;3)-beta-D-GlcNAc-(1-&gt;4)-O-6-P-alpha-D-Man}-L-Thr-[protein] + UDP-alpha-D-glucuronate = 3-O-{beta-D-GlcA-(1-&gt;[3)-alpha-D-Xyl-(1-&gt;3)-beta-D-GlcA-(1-&gt;](n)-4)-beta-D-Xyl-(1-&gt;4)-Rib-ol-P-Rib-ol-P-3-beta-D-GalNAc-(1-&gt;3)-beta-D-GlcNAc-(1-&gt;4)-O-6-P-alpha-D-Man}-L-Thr-[protein] + UDP + H(+)</text>
        <dbReference type="Rhea" id="RHEA:67924"/>
        <dbReference type="Rhea" id="RHEA-COMP:17484"/>
        <dbReference type="Rhea" id="RHEA-COMP:17486"/>
        <dbReference type="ChEBI" id="CHEBI:15378"/>
        <dbReference type="ChEBI" id="CHEBI:58052"/>
        <dbReference type="ChEBI" id="CHEBI:58223"/>
        <dbReference type="ChEBI" id="CHEBI:177354"/>
        <dbReference type="ChEBI" id="CHEBI:177355"/>
    </reaction>
    <physiologicalReaction direction="left-to-right" evidence="10 13">
        <dbReference type="Rhea" id="RHEA:67925"/>
    </physiologicalReaction>
</comment>
<comment type="catalytic activity">
    <reaction evidence="1">
        <text>3-O-{beta-D-GlcA-(1-&gt;[3)-alpha-D-Xyl-(1-&gt;3)-beta-D-GlcA-(1-&gt;](n)-4)-beta-D-Xyl-(1-&gt;4)-Rib-ol-P-Rib-ol-P-3-beta-D-GalNAc-(1-&gt;3)-beta-D-GlcNAc-(1-&gt;4)-O-6-P-alpha-D-Man}-L-Thr-[protein] + UDP-alpha-D-xylose = 3-O-{(1-&gt;[3)-alpha-D-Xyl-(1-&gt;3)-beta-D-GlcA-(1-&gt;](n+1)-4)-beta-D-Xyl-(1-&gt;4)-Rib-ol-P-Rib-ol-P-3-beta-D-GalNAc-(1-&gt;3)-beta-D-GlcNAc-(1-&gt;4)-O-6-P-alpha-D-Man}-L-Thr-[protein] + UDP + H(+)</text>
        <dbReference type="Rhea" id="RHEA:68368"/>
        <dbReference type="Rhea" id="RHEA-COMP:17485"/>
        <dbReference type="Rhea" id="RHEA-COMP:17486"/>
        <dbReference type="ChEBI" id="CHEBI:15378"/>
        <dbReference type="ChEBI" id="CHEBI:57632"/>
        <dbReference type="ChEBI" id="CHEBI:58223"/>
        <dbReference type="ChEBI" id="CHEBI:177354"/>
        <dbReference type="ChEBI" id="CHEBI:177355"/>
    </reaction>
    <physiologicalReaction direction="left-to-right" evidence="1">
        <dbReference type="Rhea" id="RHEA:68369"/>
    </physiologicalReaction>
</comment>
<comment type="cofactor">
    <cofactor evidence="1">
        <name>Mn(2+)</name>
        <dbReference type="ChEBI" id="CHEBI:29035"/>
    </cofactor>
    <text evidence="1">Binds 2 Mn(2+) ions per subunit. The xylosyltransferase part binds one Mn(2+) and the beta-1,3-glucuronyltransferase part binds one Mn(2+).</text>
</comment>
<comment type="pathway">
    <text evidence="4 9">Protein modification; protein glycosylation.</text>
</comment>
<comment type="subunit">
    <text evidence="1 5">Interacts with DAG1 (via the N-terminal domain of alpha-DAG1); the interaction increases binding of DAG1 to laminin (PubMed:15210115). Interacts with B4GAT1.</text>
</comment>
<comment type="subcellular location">
    <subcellularLocation>
        <location evidence="1">Golgi apparatus membrane</location>
        <topology evidence="1">Single-pass type II membrane protein</topology>
    </subcellularLocation>
</comment>
<comment type="tissue specificity">
    <text evidence="6">Ubiquitous. Highest expression in heart, diaphragm and brain, where it is especially found in cerebral cortex, hippocampus, and trigeminal ganglion.</text>
</comment>
<comment type="developmental stage">
    <text>Ubiquitously found at 14.5 dpc with strong expression in heart, central nervous system structures such as cerebral cortex, hippocampus, olfactory lobe, trigeminal ganglion and spinal cord. Also expressed in diaphragm and duodenum.</text>
</comment>
<comment type="disease">
    <text evidence="6">Defects in Large are the cause of myodystrophy (myd), an autosomal recessive neuromuscular phenotype, probably due to abnormal post-translational modification of alpha-dystroglycan.</text>
</comment>
<comment type="similarity">
    <text evidence="12">In the C-terminal section; belongs to the glycosyltransferase 49 family.</text>
</comment>
<comment type="similarity">
    <text evidence="12">In the N-terminal section; belongs to the glycosyltransferase 8 family.</text>
</comment>
<comment type="sequence caution" evidence="12">
    <conflict type="erroneous initiation">
        <sequence resource="EMBL-CDS" id="AAH61506"/>
    </conflict>
    <text>Truncated N-terminus.</text>
</comment>
<comment type="sequence caution" evidence="12">
    <conflict type="frameshift">
        <sequence resource="EMBL-CDS" id="BAC65610"/>
    </conflict>
</comment>
<comment type="online information" name="Functional Glycomics Gateway - GTase">
    <link uri="http://www.functionalglycomics.org/glycomics/molecule/jsp/glycoEnzyme/viewGlycoEnzyme.jsp?gbpId=gt_mou_589"/>
    <text>Large like-glycosyltransferase</text>
</comment>
<protein>
    <recommendedName>
        <fullName evidence="12">Xylosyl- and glucuronyltransferase LARGE1</fullName>
        <ecNumber evidence="1">2.4.-.-</ecNumber>
    </recommendedName>
    <alternativeName>
        <fullName>Acetylglucosaminyltransferase-like 1A</fullName>
    </alternativeName>
    <alternativeName>
        <fullName>Glycosyltransferase-like protein</fullName>
    </alternativeName>
    <alternativeName>
        <fullName evidence="14">LARGE xylosyl- and glucuronyltransferase 1</fullName>
    </alternativeName>
    <domain>
        <recommendedName>
            <fullName evidence="12">Alpha-1,3-xylosyltransferase LARGE1</fullName>
            <ecNumber evidence="1">2.4.2.-</ecNumber>
        </recommendedName>
    </domain>
    <domain>
        <recommendedName>
            <fullName evidence="12">Beta-1,3-glucuronyltransferase LARGE1</fullName>
            <ecNumber evidence="10 11">2.4.1.-</ecNumber>
        </recommendedName>
    </domain>
</protein>
<keyword id="KW-0175">Coiled coil</keyword>
<keyword id="KW-0325">Glycoprotein</keyword>
<keyword id="KW-0328">Glycosyltransferase</keyword>
<keyword id="KW-0333">Golgi apparatus</keyword>
<keyword id="KW-0464">Manganese</keyword>
<keyword id="KW-0472">Membrane</keyword>
<keyword id="KW-0479">Metal-binding</keyword>
<keyword id="KW-0511">Multifunctional enzyme</keyword>
<keyword id="KW-1185">Reference proteome</keyword>
<keyword id="KW-0735">Signal-anchor</keyword>
<keyword id="KW-0808">Transferase</keyword>
<keyword id="KW-0812">Transmembrane</keyword>
<keyword id="KW-1133">Transmembrane helix</keyword>
<sequence length="756" mass="87964">MLGICRGRRKFLAASLTLLCIPAITWIYLFAGSFEDGKPVSLSPLESQAHSPRYTASSQRERESLEVRVREVEEENRALRRQLSLAQGQSPAHHRGNHSKTYSMEEGTGDSENLRAGIVAGNSSECGQQPAVEKCETIHVAIVCAGYNASRDVVTLVKSVLFHRRNPLHFHLIADSIAEQILATLFQTWMVPAVRVDFYNADELKSEVSWIPNKHYSGIYGLMKLVLTKTLPANLERVIVLDTDITFATDIAELWAVFHKFKGQQVLGLVENQSDWYLGNLWKNHRPWPALGRGYNTGVILLLLDKLRKMKWEQMWRLTAERELMGMLSTSLADQDIFNAVIKQNPFLVYQLPCFWNVQLSDHTRSEQCYRDVSDLKVIHWNSPKKLRVKNKHVEFFRNLYLTFLEYDGNLLRRELFGCPSETDVNNENLQKQLSELDEDDLCYEFRRERFTVHRTHLYFLHYEFEPSADNTDVTLVAQLSMDRLQMLEAICKHWEGPISLALYLSDAEAQQFLRYAQGSEVLMSRQNVGYHIVYKEGQFYPVNLLRNVAMKHISTPYMFLSDIDFLPMYGLYEYLRKSVIQLDLANTKKAMIVPAFETLRYRLSFPKSKAELLSMLDMGTLFTFRYHVWTKGHAPTNFAKWRTATTPYQVEWEADFEPYVVVRRDCPEYDRRFVGFGWNKVAHIMELDAQEYEFTVLPNAYMIHMPHAPSFDITKFRSNKQYRICLKTLKEEFQQDMSRRYGFAALKYLTAENNS</sequence>
<name>LARG1_MOUSE</name>
<organism>
    <name type="scientific">Mus musculus</name>
    <name type="common">Mouse</name>
    <dbReference type="NCBI Taxonomy" id="10090"/>
    <lineage>
        <taxon>Eukaryota</taxon>
        <taxon>Metazoa</taxon>
        <taxon>Chordata</taxon>
        <taxon>Craniata</taxon>
        <taxon>Vertebrata</taxon>
        <taxon>Euteleostomi</taxon>
        <taxon>Mammalia</taxon>
        <taxon>Eutheria</taxon>
        <taxon>Euarchontoglires</taxon>
        <taxon>Glires</taxon>
        <taxon>Rodentia</taxon>
        <taxon>Myomorpha</taxon>
        <taxon>Muroidea</taxon>
        <taxon>Muridae</taxon>
        <taxon>Murinae</taxon>
        <taxon>Mus</taxon>
        <taxon>Mus</taxon>
    </lineage>
</organism>
<accession>Q9Z1M7</accession>
<accession>Q497S9</accession>
<accession>Q6P7U2</accession>
<accession>Q80TW0</accession>